<keyword id="KW-0002">3D-structure</keyword>
<keyword id="KW-1003">Cell membrane</keyword>
<keyword id="KW-0145">Chemotaxis</keyword>
<keyword id="KW-1015">Disulfide bond</keyword>
<keyword id="KW-0297">G-protein coupled receptor</keyword>
<keyword id="KW-0325">Glycoprotein</keyword>
<keyword id="KW-0472">Membrane</keyword>
<keyword id="KW-0597">Phosphoprotein</keyword>
<keyword id="KW-1267">Proteomics identification</keyword>
<keyword id="KW-0675">Receptor</keyword>
<keyword id="KW-1185">Reference proteome</keyword>
<keyword id="KW-0807">Transducer</keyword>
<keyword id="KW-0812">Transmembrane</keyword>
<keyword id="KW-1133">Transmembrane helix</keyword>
<reference key="1">
    <citation type="journal article" date="1990" name="Biochem. Biophys. Res. Commun.">
        <title>Synthesis and use of a novel N-formyl peptide derivative to isolate a human N-formyl peptide receptor cDNA.</title>
        <authorList>
            <person name="Boulay F."/>
            <person name="Tardif M."/>
            <person name="Brouchon L."/>
            <person name="Vignais P."/>
        </authorList>
    </citation>
    <scope>NUCLEOTIDE SEQUENCE [MRNA]</scope>
    <scope>FUNCTION</scope>
    <scope>VARIANTS LEU-101 AND ALA-346</scope>
</reference>
<reference key="2">
    <citation type="journal article" date="1990" name="Biochemistry">
        <title>The human N-formylpeptide receptor. Characterization of two cDNA isolates and evidence for a new subfamily of G-protein-coupled receptors.</title>
        <authorList>
            <person name="Boulay F."/>
            <person name="Tardif M."/>
            <person name="Brouchon L."/>
            <person name="Vignais P."/>
        </authorList>
    </citation>
    <scope>NUCLEOTIDE SEQUENCE [MRNA]</scope>
    <scope>FUNCTION</scope>
    <scope>SUBCELLULAR LOCATION</scope>
    <scope>VARIANTS LEU-101 AND ALA-346</scope>
</reference>
<reference key="3">
    <citation type="journal article" date="1991" name="J. Biol. Chem.">
        <title>Functional expression of the human formyl peptide receptor in Xenopus oocytes requires a complementary human factor.</title>
        <authorList>
            <person name="Murphy P.M."/>
            <person name="McDermott D."/>
        </authorList>
    </citation>
    <scope>NUCLEOTIDE SEQUENCE [MRNA]</scope>
    <scope>FUNCTION</scope>
</reference>
<reference key="4">
    <citation type="journal article" date="1992" name="Genomics">
        <title>Mapping of genes for the human C5a receptor (C5AR), human FMLP receptor (FPR), and two FMLP receptor homologue orphan receptors (FPRH1, FPRH2) to chromosome 19.</title>
        <authorList>
            <person name="Bao L."/>
            <person name="Gerard N.P."/>
            <person name="Eddy R.L. Jr."/>
            <person name="Shows T.B."/>
            <person name="Gerard C."/>
        </authorList>
    </citation>
    <scope>NUCLEOTIDE SEQUENCE [GENOMIC DNA]</scope>
    <scope>VARIANT LYS-192</scope>
</reference>
<reference key="5">
    <citation type="submission" date="1993-03" db="EMBL/GenBank/DDBJ databases">
        <authorList>
            <person name="Perez H.D."/>
        </authorList>
    </citation>
    <scope>NUCLEOTIDE SEQUENCE [GENOMIC DNA]</scope>
    <scope>VARIANT ALA-346</scope>
</reference>
<reference key="6">
    <citation type="journal article" date="1993" name="Gene">
        <title>Sequence and organization of the human N-formyl peptide receptor-encoding gene.</title>
        <authorList>
            <person name="Murphy P.M."/>
            <person name="Tiffany H.L."/>
            <person name="McDermott D."/>
            <person name="Ahuja S.K."/>
        </authorList>
    </citation>
    <scope>NUCLEOTIDE SEQUENCE [GENOMIC DNA]</scope>
</reference>
<reference key="7">
    <citation type="submission" date="2003-05" db="EMBL/GenBank/DDBJ databases">
        <title>cDNA clones of human proteins involved in signal transduction sequenced by the Guthrie cDNA resource center (www.cdna.org).</title>
        <authorList>
            <person name="Kopatz S.A."/>
            <person name="Aronstam R.S."/>
            <person name="Sharma S.V."/>
        </authorList>
    </citation>
    <scope>NUCLEOTIDE SEQUENCE [LARGE SCALE MRNA]</scope>
    <scope>VARIANTS THR-11 AND LYS-192</scope>
</reference>
<reference key="8">
    <citation type="submission" date="2003-05" db="EMBL/GenBank/DDBJ databases">
        <title>Cloning of human full-length CDSs in BD Creator(TM) system donor vector.</title>
        <authorList>
            <person name="Kalnine N."/>
            <person name="Chen X."/>
            <person name="Rolfs A."/>
            <person name="Halleck A."/>
            <person name="Hines L."/>
            <person name="Eisenstein S."/>
            <person name="Koundinya M."/>
            <person name="Raphael J."/>
            <person name="Moreira D."/>
            <person name="Kelley T."/>
            <person name="LaBaer J."/>
            <person name="Lin Y."/>
            <person name="Phelan M."/>
            <person name="Farmer A."/>
        </authorList>
    </citation>
    <scope>NUCLEOTIDE SEQUENCE [LARGE SCALE MRNA]</scope>
</reference>
<reference key="9">
    <citation type="journal article" date="2004" name="Nature">
        <title>The DNA sequence and biology of human chromosome 19.</title>
        <authorList>
            <person name="Grimwood J."/>
            <person name="Gordon L.A."/>
            <person name="Olsen A.S."/>
            <person name="Terry A."/>
            <person name="Schmutz J."/>
            <person name="Lamerdin J.E."/>
            <person name="Hellsten U."/>
            <person name="Goodstein D."/>
            <person name="Couronne O."/>
            <person name="Tran-Gyamfi M."/>
            <person name="Aerts A."/>
            <person name="Altherr M."/>
            <person name="Ashworth L."/>
            <person name="Bajorek E."/>
            <person name="Black S."/>
            <person name="Branscomb E."/>
            <person name="Caenepeel S."/>
            <person name="Carrano A.V."/>
            <person name="Caoile C."/>
            <person name="Chan Y.M."/>
            <person name="Christensen M."/>
            <person name="Cleland C.A."/>
            <person name="Copeland A."/>
            <person name="Dalin E."/>
            <person name="Dehal P."/>
            <person name="Denys M."/>
            <person name="Detter J.C."/>
            <person name="Escobar J."/>
            <person name="Flowers D."/>
            <person name="Fotopulos D."/>
            <person name="Garcia C."/>
            <person name="Georgescu A.M."/>
            <person name="Glavina T."/>
            <person name="Gomez M."/>
            <person name="Gonzales E."/>
            <person name="Groza M."/>
            <person name="Hammon N."/>
            <person name="Hawkins T."/>
            <person name="Haydu L."/>
            <person name="Ho I."/>
            <person name="Huang W."/>
            <person name="Israni S."/>
            <person name="Jett J."/>
            <person name="Kadner K."/>
            <person name="Kimball H."/>
            <person name="Kobayashi A."/>
            <person name="Larionov V."/>
            <person name="Leem S.-H."/>
            <person name="Lopez F."/>
            <person name="Lou Y."/>
            <person name="Lowry S."/>
            <person name="Malfatti S."/>
            <person name="Martinez D."/>
            <person name="McCready P.M."/>
            <person name="Medina C."/>
            <person name="Morgan J."/>
            <person name="Nelson K."/>
            <person name="Nolan M."/>
            <person name="Ovcharenko I."/>
            <person name="Pitluck S."/>
            <person name="Pollard M."/>
            <person name="Popkie A.P."/>
            <person name="Predki P."/>
            <person name="Quan G."/>
            <person name="Ramirez L."/>
            <person name="Rash S."/>
            <person name="Retterer J."/>
            <person name="Rodriguez A."/>
            <person name="Rogers S."/>
            <person name="Salamov A."/>
            <person name="Salazar A."/>
            <person name="She X."/>
            <person name="Smith D."/>
            <person name="Slezak T."/>
            <person name="Solovyev V."/>
            <person name="Thayer N."/>
            <person name="Tice H."/>
            <person name="Tsai M."/>
            <person name="Ustaszewska A."/>
            <person name="Vo N."/>
            <person name="Wagner M."/>
            <person name="Wheeler J."/>
            <person name="Wu K."/>
            <person name="Xie G."/>
            <person name="Yang J."/>
            <person name="Dubchak I."/>
            <person name="Furey T.S."/>
            <person name="DeJong P."/>
            <person name="Dickson M."/>
            <person name="Gordon D."/>
            <person name="Eichler E.E."/>
            <person name="Pennacchio L.A."/>
            <person name="Richardson P."/>
            <person name="Stubbs L."/>
            <person name="Rokhsar D.S."/>
            <person name="Myers R.M."/>
            <person name="Rubin E.M."/>
            <person name="Lucas S.M."/>
        </authorList>
    </citation>
    <scope>NUCLEOTIDE SEQUENCE [LARGE SCALE GENOMIC DNA]</scope>
</reference>
<reference key="10">
    <citation type="journal article" date="2004" name="Genome Res.">
        <title>The status, quality, and expansion of the NIH full-length cDNA project: the Mammalian Gene Collection (MGC).</title>
        <authorList>
            <consortium name="The MGC Project Team"/>
        </authorList>
    </citation>
    <scope>NUCLEOTIDE SEQUENCE [LARGE SCALE MRNA]</scope>
    <source>
        <tissue>Kidney</tissue>
    </source>
</reference>
<reference key="11">
    <citation type="journal article" date="1992" name="Biochemistry">
        <title>Cloning of the gene coding for a human receptor for formyl peptides. Characterization of a promoter region and evidence for polymorphic expression.</title>
        <authorList>
            <person name="Perez H.D."/>
            <person name="Holmes R."/>
            <person name="Kelly E."/>
            <person name="McClary J."/>
            <person name="Chou Q."/>
            <person name="Andrews W.H."/>
        </authorList>
    </citation>
    <scope>NUCLEOTIDE SEQUENCE [MRNA] OF 1-5</scope>
    <source>
        <tissue>Bone marrow</tissue>
    </source>
</reference>
<reference key="12">
    <citation type="journal article" date="1999" name="J. Biol. Chem.">
        <title>Differential phosphorylation paradigms dictate desensitization and internalization of the N-formyl peptide receptor.</title>
        <authorList>
            <person name="Maestes D.C."/>
            <person name="Potter R.M."/>
            <person name="Prossnitz E.R."/>
        </authorList>
    </citation>
    <scope>FUNCTION</scope>
    <scope>SUBCELLULAR LOCATION</scope>
    <scope>PHOSPHORYLATION AT SER-328; THR-329; THR-331; SER-332; THR-334; THR-336; SER-338 AND THR-339</scope>
</reference>
<reference key="13">
    <citation type="journal article" date="2004" name="J. Immunol.">
        <title>Chemotaxis inhibitory protein of Staphylococcus aureus binds specifically to the C5a and formylated peptide receptor.</title>
        <authorList>
            <person name="Postma B."/>
            <person name="Poppelier M.J.J.G."/>
            <person name="van Galen J.C."/>
            <person name="Prossnitz E.R."/>
            <person name="van Strijp J.A.G."/>
            <person name="de Haas C.J.C."/>
            <person name="van Kessel K.P.M."/>
        </authorList>
    </citation>
    <scope>FUNCTION</scope>
    <scope>INTERACTION WITH CHIPS</scope>
    <scope>SUBCELLULAR LOCATION</scope>
</reference>
<reference key="14">
    <citation type="journal article" date="2004" name="J. Immunol.">
        <title>Identification of neutrophil granule protein cathepsin G as a novel chemotactic agonist for the G protein-coupled formyl peptide receptor.</title>
        <authorList>
            <person name="Sun R."/>
            <person name="Iribarren P."/>
            <person name="Zhang N."/>
            <person name="Zhou Y."/>
            <person name="Gong W."/>
            <person name="Cho E.H."/>
            <person name="Lockett S."/>
            <person name="Chertov O."/>
            <person name="Bednar F."/>
            <person name="Rogers T.J."/>
            <person name="Oppenheim J.J."/>
            <person name="Wang J.M."/>
        </authorList>
    </citation>
    <scope>FUNCTION</scope>
</reference>
<reference key="15">
    <citation type="journal article" date="2015" name="Cell. Mol. Immunol.">
        <title>FAM19A4 is a novel cytokine ligand of formyl peptide receptor 1 (FPR1) and is able to promote the migration and phagocytosis of macrophages.</title>
        <authorList>
            <person name="Wang W."/>
            <person name="Li T."/>
            <person name="Wang X."/>
            <person name="Yuan W."/>
            <person name="Cheng Y."/>
            <person name="Zhang H."/>
            <person name="Xu E."/>
            <person name="Zhang Y."/>
            <person name="Shi S."/>
            <person name="Ma D."/>
            <person name="Han W."/>
        </authorList>
    </citation>
    <scope>FUNCTION</scope>
    <scope>SUBCELLULAR LOCATION</scope>
</reference>
<protein>
    <recommendedName>
        <fullName>fMet-Leu-Phe receptor</fullName>
        <shortName>fMLP receptor</shortName>
    </recommendedName>
    <alternativeName>
        <fullName>N-formyl peptide receptor</fullName>
        <shortName>FPR</shortName>
    </alternativeName>
    <alternativeName>
        <fullName>N-formylpeptide chemoattractant receptor</fullName>
    </alternativeName>
</protein>
<sequence>METNSSLPTNISGGTPAVSAGYLFLDIITYLVFAVTFVLGVLGNGLVIWVAGFRMTHTVTTISYLNLAVADFCFTSTLPFFMVRKAMGGHWPFGWFLCKFVFTIVDINLFGSVFLIALIALDRCVCVLHPVWTQNHRTVSLAKKVIIGPWVMALLLTLPVIIRVTTVPGKTGTVACTFNFSPWTNDPKERINVAVAMLTVRGIIRFIIGFSAPMSIVAVSYGLIATKIHKQGLIKSSRPLRVLSFVAAAFFLCWSPYQVVALIATVRIRELLQGMYKEIGIAVDVTSALAFFNSCLNPMLYVFMGQDFRERLIHALPASLERALTEDSTQTSDTATNSTLPSAEVELQAK</sequence>
<feature type="chain" id="PRO_0000069444" description="fMet-Leu-Phe receptor">
    <location>
        <begin position="1"/>
        <end position="350"/>
    </location>
</feature>
<feature type="topological domain" description="Extracellular" evidence="1">
    <location>
        <begin position="1"/>
        <end position="27"/>
    </location>
</feature>
<feature type="transmembrane region" description="Helical; Name=1" evidence="1">
    <location>
        <begin position="28"/>
        <end position="50"/>
    </location>
</feature>
<feature type="topological domain" description="Cytoplasmic" evidence="1">
    <location>
        <begin position="51"/>
        <end position="61"/>
    </location>
</feature>
<feature type="transmembrane region" description="Helical; Name=2" evidence="1">
    <location>
        <begin position="62"/>
        <end position="83"/>
    </location>
</feature>
<feature type="topological domain" description="Extracellular" evidence="1">
    <location>
        <begin position="84"/>
        <end position="100"/>
    </location>
</feature>
<feature type="transmembrane region" description="Helical; Name=3" evidence="1">
    <location>
        <begin position="101"/>
        <end position="121"/>
    </location>
</feature>
<feature type="topological domain" description="Cytoplasmic" evidence="1">
    <location>
        <begin position="122"/>
        <end position="140"/>
    </location>
</feature>
<feature type="transmembrane region" description="Helical; Name=4" evidence="1">
    <location>
        <begin position="141"/>
        <end position="162"/>
    </location>
</feature>
<feature type="topological domain" description="Extracellular" evidence="1">
    <location>
        <begin position="163"/>
        <end position="205"/>
    </location>
</feature>
<feature type="transmembrane region" description="Helical; Name=5" evidence="1">
    <location>
        <begin position="206"/>
        <end position="226"/>
    </location>
</feature>
<feature type="topological domain" description="Cytoplasmic" evidence="1">
    <location>
        <begin position="227"/>
        <end position="242"/>
    </location>
</feature>
<feature type="transmembrane region" description="Helical; Name=6" evidence="1">
    <location>
        <begin position="243"/>
        <end position="266"/>
    </location>
</feature>
<feature type="topological domain" description="Extracellular" evidence="1">
    <location>
        <begin position="267"/>
        <end position="285"/>
    </location>
</feature>
<feature type="transmembrane region" description="Helical; Name=7" evidence="1">
    <location>
        <begin position="286"/>
        <end position="305"/>
    </location>
</feature>
<feature type="topological domain" description="Cytoplasmic" evidence="1">
    <location>
        <begin position="306"/>
        <end position="350"/>
    </location>
</feature>
<feature type="region of interest" description="Disordered" evidence="3">
    <location>
        <begin position="325"/>
        <end position="350"/>
    </location>
</feature>
<feature type="compositionally biased region" description="Polar residues" evidence="3">
    <location>
        <begin position="326"/>
        <end position="341"/>
    </location>
</feature>
<feature type="modified residue" description="Phosphoserine" evidence="1">
    <location>
        <position position="328"/>
    </location>
</feature>
<feature type="modified residue" description="Phosphothreonine" evidence="1">
    <location>
        <position position="329"/>
    </location>
</feature>
<feature type="modified residue" description="Phosphothreonine" evidence="1">
    <location>
        <position position="331"/>
    </location>
</feature>
<feature type="modified residue" description="Phosphoserine" evidence="1">
    <location>
        <position position="332"/>
    </location>
</feature>
<feature type="modified residue" description="Phosphothreonine" evidence="1">
    <location>
        <position position="334"/>
    </location>
</feature>
<feature type="modified residue" description="Phosphothreonine" evidence="1">
    <location>
        <position position="336"/>
    </location>
</feature>
<feature type="modified residue" description="Phosphoserine" evidence="1">
    <location>
        <position position="338"/>
    </location>
</feature>
<feature type="modified residue" description="Phosphothreonine" evidence="1">
    <location>
        <position position="339"/>
    </location>
</feature>
<feature type="glycosylation site" description="N-linked (GlcNAc...) asparagine" evidence="1">
    <location>
        <position position="4"/>
    </location>
</feature>
<feature type="glycosylation site" description="N-linked (GlcNAc...) asparagine" evidence="1">
    <location>
        <position position="10"/>
    </location>
</feature>
<feature type="disulfide bond" evidence="2">
    <location>
        <begin position="98"/>
        <end position="176"/>
    </location>
</feature>
<feature type="sequence variant" id="VAR_055915" description="In dbSNP:rs5030878." evidence="12">
    <original>I</original>
    <variation>T</variation>
    <location>
        <position position="11"/>
    </location>
</feature>
<feature type="sequence variant" id="VAR_003476" description="In dbSNP:rs2070745." evidence="8 9">
    <original>V</original>
    <variation>L</variation>
    <location>
        <position position="101"/>
    </location>
</feature>
<feature type="sequence variant" id="VAR_055916" description="In dbSNP:rs5030880.">
    <original>R</original>
    <variation>W</variation>
    <location>
        <position position="190"/>
    </location>
</feature>
<feature type="sequence variant" id="VAR_003477" description="In dbSNP:rs1042229." evidence="7 12">
    <original>N</original>
    <variation>K</variation>
    <location>
        <position position="192"/>
    </location>
</feature>
<feature type="sequence variant" id="VAR_003478" description="In dbSNP:rs867228." evidence="8 9 11">
    <original>E</original>
    <variation>A</variation>
    <location>
        <position position="346"/>
    </location>
</feature>
<feature type="sequence conflict" description="In Ref. 1; AAA36362." evidence="17" ref="1">
    <original>R</original>
    <variation>P</variation>
    <location>
        <position position="238"/>
    </location>
</feature>
<feature type="helix" evidence="19">
    <location>
        <begin position="23"/>
        <end position="53"/>
    </location>
</feature>
<feature type="helix" evidence="19">
    <location>
        <begin position="59"/>
        <end position="75"/>
    </location>
</feature>
<feature type="helix" evidence="19">
    <location>
        <begin position="78"/>
        <end position="86"/>
    </location>
</feature>
<feature type="turn" evidence="19">
    <location>
        <begin position="87"/>
        <end position="89"/>
    </location>
</feature>
<feature type="helix" evidence="19">
    <location>
        <begin position="95"/>
        <end position="128"/>
    </location>
</feature>
<feature type="helix" evidence="19">
    <location>
        <begin position="130"/>
        <end position="136"/>
    </location>
</feature>
<feature type="helix" evidence="19">
    <location>
        <begin position="139"/>
        <end position="145"/>
    </location>
</feature>
<feature type="helix" evidence="19">
    <location>
        <begin position="147"/>
        <end position="163"/>
    </location>
</feature>
<feature type="strand" evidence="19">
    <location>
        <begin position="164"/>
        <end position="169"/>
    </location>
</feature>
<feature type="turn" evidence="19">
    <location>
        <begin position="170"/>
        <end position="172"/>
    </location>
</feature>
<feature type="strand" evidence="19">
    <location>
        <begin position="173"/>
        <end position="178"/>
    </location>
</feature>
<feature type="helix" evidence="19">
    <location>
        <begin position="187"/>
        <end position="208"/>
    </location>
</feature>
<feature type="helix" evidence="19">
    <location>
        <begin position="211"/>
        <end position="230"/>
    </location>
</feature>
<feature type="helix" evidence="19">
    <location>
        <begin position="237"/>
        <end position="266"/>
    </location>
</feature>
<feature type="helix" evidence="19">
    <location>
        <begin position="268"/>
        <end position="272"/>
    </location>
</feature>
<feature type="helix" evidence="19">
    <location>
        <begin position="278"/>
        <end position="302"/>
    </location>
</feature>
<feature type="helix" evidence="19">
    <location>
        <begin position="306"/>
        <end position="314"/>
    </location>
</feature>
<name>FPR1_HUMAN</name>
<accession>P21462</accession>
<accession>Q14939</accession>
<accession>Q7Z6A4</accession>
<accession>Q86U52</accession>
<accession>Q9NS48</accession>
<dbReference type="EMBL" id="M37128">
    <property type="protein sequence ID" value="AAA36362.1"/>
    <property type="molecule type" value="mRNA"/>
</dbReference>
<dbReference type="EMBL" id="M60626">
    <property type="protein sequence ID" value="AAA35846.1"/>
    <property type="molecule type" value="mRNA"/>
</dbReference>
<dbReference type="EMBL" id="M60627">
    <property type="protein sequence ID" value="AAA35847.1"/>
    <property type="molecule type" value="mRNA"/>
</dbReference>
<dbReference type="EMBL" id="L10820">
    <property type="protein sequence ID" value="AAA16863.1"/>
    <property type="molecule type" value="Genomic_DNA"/>
</dbReference>
<dbReference type="EMBL" id="AY301273">
    <property type="protein sequence ID" value="AAP58403.1"/>
    <property type="molecule type" value="Genomic_DNA"/>
</dbReference>
<dbReference type="EMBL" id="BT007429">
    <property type="protein sequence ID" value="AAP36097.1"/>
    <property type="molecule type" value="mRNA"/>
</dbReference>
<dbReference type="EMBL" id="AC018755">
    <property type="protein sequence ID" value="AAF87842.1"/>
    <property type="molecule type" value="Genomic_DNA"/>
</dbReference>
<dbReference type="EMBL" id="BC005315">
    <property type="protein sequence ID" value="AAH05315.1"/>
    <property type="molecule type" value="mRNA"/>
</dbReference>
<dbReference type="EMBL" id="S49810">
    <property type="protein sequence ID" value="AAD14906.1"/>
    <property type="molecule type" value="mRNA"/>
</dbReference>
<dbReference type="CCDS" id="CCDS12839.1"/>
<dbReference type="PIR" id="JC2014">
    <property type="entry name" value="A42009"/>
</dbReference>
<dbReference type="RefSeq" id="NP_001180235.1">
    <property type="nucleotide sequence ID" value="NM_001193306.2"/>
</dbReference>
<dbReference type="RefSeq" id="NP_002020.1">
    <property type="nucleotide sequence ID" value="NM_002029.4"/>
</dbReference>
<dbReference type="PDB" id="7EUO">
    <property type="method" value="EM"/>
    <property type="resolution" value="2.90 A"/>
    <property type="chains" value="R=1-350"/>
</dbReference>
<dbReference type="PDB" id="7T6T">
    <property type="method" value="EM"/>
    <property type="resolution" value="3.20 A"/>
    <property type="chains" value="R=1-333"/>
</dbReference>
<dbReference type="PDB" id="7VFX">
    <property type="method" value="EM"/>
    <property type="resolution" value="2.80 A"/>
    <property type="chains" value="R=1-350"/>
</dbReference>
<dbReference type="PDB" id="7WVU">
    <property type="method" value="EM"/>
    <property type="resolution" value="3.30 A"/>
    <property type="chains" value="R=2-321"/>
</dbReference>
<dbReference type="PDBsum" id="7EUO"/>
<dbReference type="PDBsum" id="7T6T"/>
<dbReference type="PDBsum" id="7VFX"/>
<dbReference type="PDBsum" id="7WVU"/>
<dbReference type="EMDB" id="EMD-25727"/>
<dbReference type="EMDB" id="EMD-31323"/>
<dbReference type="EMDB" id="EMD-31962"/>
<dbReference type="EMDB" id="EMD-32858"/>
<dbReference type="SMR" id="P21462"/>
<dbReference type="BioGRID" id="108640">
    <property type="interactions" value="152"/>
</dbReference>
<dbReference type="FunCoup" id="P21462">
    <property type="interactions" value="641"/>
</dbReference>
<dbReference type="IntAct" id="P21462">
    <property type="interactions" value="141"/>
</dbReference>
<dbReference type="STRING" id="9606.ENSP00000471493"/>
<dbReference type="BindingDB" id="P21462"/>
<dbReference type="ChEMBL" id="CHEMBL3359"/>
<dbReference type="DrugBank" id="DB00716">
    <property type="generic name" value="Nedocromil"/>
</dbReference>
<dbReference type="DrugBank" id="DB11656">
    <property type="generic name" value="Rebamipide"/>
</dbReference>
<dbReference type="DrugCentral" id="P21462"/>
<dbReference type="GuidetoPHARMACOLOGY" id="222"/>
<dbReference type="GlyCosmos" id="P21462">
    <property type="glycosylation" value="2 sites, No reported glycans"/>
</dbReference>
<dbReference type="GlyGen" id="P21462">
    <property type="glycosylation" value="3 sites"/>
</dbReference>
<dbReference type="iPTMnet" id="P21462"/>
<dbReference type="PhosphoSitePlus" id="P21462"/>
<dbReference type="BioMuta" id="FPR1"/>
<dbReference type="DMDM" id="288558848"/>
<dbReference type="MassIVE" id="P21462"/>
<dbReference type="PaxDb" id="9606-ENSP00000471493"/>
<dbReference type="PeptideAtlas" id="P21462"/>
<dbReference type="ProteomicsDB" id="53872"/>
<dbReference type="ABCD" id="P21462">
    <property type="antibodies" value="6 sequenced antibodies"/>
</dbReference>
<dbReference type="Antibodypedia" id="19049">
    <property type="antibodies" value="432 antibodies from 34 providers"/>
</dbReference>
<dbReference type="DNASU" id="2357"/>
<dbReference type="Ensembl" id="ENST00000304748.5">
    <property type="protein sequence ID" value="ENSP00000302707.3"/>
    <property type="gene ID" value="ENSG00000171051.10"/>
</dbReference>
<dbReference type="Ensembl" id="ENST00000594900.2">
    <property type="protein sequence ID" value="ENSP00000470750.2"/>
    <property type="gene ID" value="ENSG00000171051.10"/>
</dbReference>
<dbReference type="Ensembl" id="ENST00000595042.5">
    <property type="protein sequence ID" value="ENSP00000471493.1"/>
    <property type="gene ID" value="ENSG00000171051.10"/>
</dbReference>
<dbReference type="Ensembl" id="ENST00000600815.2">
    <property type="protein sequence ID" value="ENSP00000472936.2"/>
    <property type="gene ID" value="ENSG00000171051.10"/>
</dbReference>
<dbReference type="GeneID" id="2357"/>
<dbReference type="KEGG" id="hsa:2357"/>
<dbReference type="MANE-Select" id="ENST00000304748.5">
    <property type="protein sequence ID" value="ENSP00000302707.3"/>
    <property type="RefSeq nucleotide sequence ID" value="NM_002029.4"/>
    <property type="RefSeq protein sequence ID" value="NP_002020.1"/>
</dbReference>
<dbReference type="UCSC" id="uc002pxq.4">
    <property type="organism name" value="human"/>
</dbReference>
<dbReference type="AGR" id="HGNC:3826"/>
<dbReference type="CTD" id="2357"/>
<dbReference type="DisGeNET" id="2357"/>
<dbReference type="GeneCards" id="FPR1"/>
<dbReference type="HGNC" id="HGNC:3826">
    <property type="gene designation" value="FPR1"/>
</dbReference>
<dbReference type="HPA" id="ENSG00000171051">
    <property type="expression patterns" value="Tissue enhanced (bone marrow, lymphoid tissue)"/>
</dbReference>
<dbReference type="MalaCards" id="FPR1"/>
<dbReference type="MIM" id="136537">
    <property type="type" value="gene"/>
</dbReference>
<dbReference type="neXtProt" id="NX_P21462"/>
<dbReference type="OpenTargets" id="ENSG00000171051"/>
<dbReference type="Orphanet" id="447740">
    <property type="disease" value="Aggressive periodontitis"/>
</dbReference>
<dbReference type="PharmGKB" id="PA28244"/>
<dbReference type="VEuPathDB" id="HostDB:ENSG00000171051"/>
<dbReference type="eggNOG" id="KOG3656">
    <property type="taxonomic scope" value="Eukaryota"/>
</dbReference>
<dbReference type="GeneTree" id="ENSGT01020000230438"/>
<dbReference type="InParanoid" id="P21462"/>
<dbReference type="OMA" id="WFMCKFI"/>
<dbReference type="OrthoDB" id="6088892at2759"/>
<dbReference type="PAN-GO" id="P21462">
    <property type="GO annotations" value="7 GO annotations based on evolutionary models"/>
</dbReference>
<dbReference type="PhylomeDB" id="P21462"/>
<dbReference type="TreeFam" id="TF330976"/>
<dbReference type="BRENDA" id="3.1.4.4">
    <property type="organism ID" value="2681"/>
</dbReference>
<dbReference type="PathwayCommons" id="P21462"/>
<dbReference type="Reactome" id="R-HSA-418594">
    <property type="pathway name" value="G alpha (i) signalling events"/>
</dbReference>
<dbReference type="Reactome" id="R-HSA-444473">
    <property type="pathway name" value="Formyl peptide receptors bind formyl peptides and many other ligands"/>
</dbReference>
<dbReference type="Reactome" id="R-HSA-6783783">
    <property type="pathway name" value="Interleukin-10 signaling"/>
</dbReference>
<dbReference type="Reactome" id="R-HSA-6798695">
    <property type="pathway name" value="Neutrophil degranulation"/>
</dbReference>
<dbReference type="SignaLink" id="P21462"/>
<dbReference type="SIGNOR" id="P21462"/>
<dbReference type="BioGRID-ORCS" id="2357">
    <property type="hits" value="9 hits in 1143 CRISPR screens"/>
</dbReference>
<dbReference type="ChiTaRS" id="FPR1">
    <property type="organism name" value="human"/>
</dbReference>
<dbReference type="GeneWiki" id="Formyl_peptide_receptor_1"/>
<dbReference type="GenomeRNAi" id="2357"/>
<dbReference type="Pharos" id="P21462">
    <property type="development level" value="Tchem"/>
</dbReference>
<dbReference type="PRO" id="PR:P21462"/>
<dbReference type="Proteomes" id="UP000005640">
    <property type="component" value="Chromosome 19"/>
</dbReference>
<dbReference type="RNAct" id="P21462">
    <property type="molecule type" value="protein"/>
</dbReference>
<dbReference type="Bgee" id="ENSG00000171051">
    <property type="expression patterns" value="Expressed in blood and 142 other cell types or tissues"/>
</dbReference>
<dbReference type="ExpressionAtlas" id="P21462">
    <property type="expression patterns" value="baseline and differential"/>
</dbReference>
<dbReference type="GO" id="GO:0035577">
    <property type="term" value="C:azurophil granule membrane"/>
    <property type="evidence" value="ECO:0000304"/>
    <property type="project" value="Reactome"/>
</dbReference>
<dbReference type="GO" id="GO:0005737">
    <property type="term" value="C:cytoplasm"/>
    <property type="evidence" value="ECO:0000250"/>
    <property type="project" value="ARUK-UCL"/>
</dbReference>
<dbReference type="GO" id="GO:0101003">
    <property type="term" value="C:ficolin-1-rich granule membrane"/>
    <property type="evidence" value="ECO:0000304"/>
    <property type="project" value="Reactome"/>
</dbReference>
<dbReference type="GO" id="GO:0016020">
    <property type="term" value="C:membrane"/>
    <property type="evidence" value="ECO:0000304"/>
    <property type="project" value="ProtInc"/>
</dbReference>
<dbReference type="GO" id="GO:0005886">
    <property type="term" value="C:plasma membrane"/>
    <property type="evidence" value="ECO:0000250"/>
    <property type="project" value="ARUK-UCL"/>
</dbReference>
<dbReference type="GO" id="GO:0030667">
    <property type="term" value="C:secretory granule membrane"/>
    <property type="evidence" value="ECO:0000304"/>
    <property type="project" value="Reactome"/>
</dbReference>
<dbReference type="GO" id="GO:0004875">
    <property type="term" value="F:complement receptor activity"/>
    <property type="evidence" value="ECO:0000318"/>
    <property type="project" value="GO_Central"/>
</dbReference>
<dbReference type="GO" id="GO:0004930">
    <property type="term" value="F:G protein-coupled receptor activity"/>
    <property type="evidence" value="ECO:0000314"/>
    <property type="project" value="UniProtKB"/>
</dbReference>
<dbReference type="GO" id="GO:0001664">
    <property type="term" value="F:G protein-coupled receptor binding"/>
    <property type="evidence" value="ECO:0000314"/>
    <property type="project" value="UniProtKB"/>
</dbReference>
<dbReference type="GO" id="GO:0004982">
    <property type="term" value="F:N-formyl peptide receptor activity"/>
    <property type="evidence" value="ECO:0000314"/>
    <property type="project" value="MGI"/>
</dbReference>
<dbReference type="GO" id="GO:0050786">
    <property type="term" value="F:RAGE receptor binding"/>
    <property type="evidence" value="ECO:0007669"/>
    <property type="project" value="Ensembl"/>
</dbReference>
<dbReference type="GO" id="GO:0005124">
    <property type="term" value="F:scavenger receptor binding"/>
    <property type="evidence" value="ECO:0007669"/>
    <property type="project" value="Ensembl"/>
</dbReference>
<dbReference type="GO" id="GO:0007188">
    <property type="term" value="P:adenylate cyclase-modulating G protein-coupled receptor signaling pathway"/>
    <property type="evidence" value="ECO:0000304"/>
    <property type="project" value="ProtInc"/>
</dbReference>
<dbReference type="GO" id="GO:0006935">
    <property type="term" value="P:chemotaxis"/>
    <property type="evidence" value="ECO:0000304"/>
    <property type="project" value="ProtInc"/>
</dbReference>
<dbReference type="GO" id="GO:0002430">
    <property type="term" value="P:complement receptor mediated signaling pathway"/>
    <property type="evidence" value="ECO:0000318"/>
    <property type="project" value="GO_Central"/>
</dbReference>
<dbReference type="GO" id="GO:0007186">
    <property type="term" value="P:G protein-coupled receptor signaling pathway"/>
    <property type="evidence" value="ECO:0000304"/>
    <property type="project" value="ProtInc"/>
</dbReference>
<dbReference type="GO" id="GO:0006954">
    <property type="term" value="P:inflammatory response"/>
    <property type="evidence" value="ECO:0000318"/>
    <property type="project" value="GO_Central"/>
</dbReference>
<dbReference type="GO" id="GO:0007263">
    <property type="term" value="P:nitric oxide mediated signal transduction"/>
    <property type="evidence" value="ECO:0000304"/>
    <property type="project" value="ProtInc"/>
</dbReference>
<dbReference type="GO" id="GO:0007200">
    <property type="term" value="P:phospholipase C-activating G protein-coupled receptor signaling pathway"/>
    <property type="evidence" value="ECO:0000314"/>
    <property type="project" value="MGI"/>
</dbReference>
<dbReference type="GO" id="GO:0007204">
    <property type="term" value="P:positive regulation of cytosolic calcium ion concentration"/>
    <property type="evidence" value="ECO:0000318"/>
    <property type="project" value="GO_Central"/>
</dbReference>
<dbReference type="GO" id="GO:0007165">
    <property type="term" value="P:signal transduction"/>
    <property type="evidence" value="ECO:0000304"/>
    <property type="project" value="ProtInc"/>
</dbReference>
<dbReference type="FunFam" id="1.20.1070.10:FF:000034">
    <property type="entry name" value="G-protein coupled receptor 1"/>
    <property type="match status" value="1"/>
</dbReference>
<dbReference type="Gene3D" id="1.20.1070.10">
    <property type="entry name" value="Rhodopsin 7-helix transmembrane proteins"/>
    <property type="match status" value="1"/>
</dbReference>
<dbReference type="InterPro" id="IPR000826">
    <property type="entry name" value="Formyl_rcpt-rel"/>
</dbReference>
<dbReference type="InterPro" id="IPR000276">
    <property type="entry name" value="GPCR_Rhodpsn"/>
</dbReference>
<dbReference type="InterPro" id="IPR017452">
    <property type="entry name" value="GPCR_Rhodpsn_7TM"/>
</dbReference>
<dbReference type="PANTHER" id="PTHR24225">
    <property type="entry name" value="CHEMOTACTIC RECEPTOR"/>
    <property type="match status" value="1"/>
</dbReference>
<dbReference type="PANTHER" id="PTHR24225:SF15">
    <property type="entry name" value="FMET-LEU-PHE RECEPTOR"/>
    <property type="match status" value="1"/>
</dbReference>
<dbReference type="Pfam" id="PF00001">
    <property type="entry name" value="7tm_1"/>
    <property type="match status" value="1"/>
</dbReference>
<dbReference type="PRINTS" id="PR00526">
    <property type="entry name" value="FMETLEUPHER"/>
</dbReference>
<dbReference type="PRINTS" id="PR00237">
    <property type="entry name" value="GPCRRHODOPSN"/>
</dbReference>
<dbReference type="SUPFAM" id="SSF81321">
    <property type="entry name" value="Family A G protein-coupled receptor-like"/>
    <property type="match status" value="1"/>
</dbReference>
<dbReference type="PROSITE" id="PS00237">
    <property type="entry name" value="G_PROTEIN_RECEP_F1_1"/>
    <property type="match status" value="1"/>
</dbReference>
<dbReference type="PROSITE" id="PS50262">
    <property type="entry name" value="G_PROTEIN_RECEP_F1_2"/>
    <property type="match status" value="1"/>
</dbReference>
<comment type="function">
    <text evidence="4 5 8 9 10 13 14 15 16">High affinity receptor for N-formyl-methionyl peptides (fMLP), which are powerful neutrophil chemotactic factors (PubMed:10514456, PubMed:15153520, PubMed:2161213, PubMed:2176894). Binding of fMLP to the receptor stimulates intracellular calcium mobilization and superoxide anion release (PubMed:15153520, PubMed:15210802, PubMed:1712023, PubMed:2161213). This response is mediated via a G-protein that activates a phosphatidylinositol-calcium second messenger system (PubMed:10514456, PubMed:1712023). Receptor for TAFA4, mediates its effects on chemoattracting macrophages, promoting phagocytosis and increasing ROS release (PubMed:25109685). Receptor for cathepsin CTSG, leading to increased phagocyte chemotaxis (PubMed:15210802).</text>
</comment>
<comment type="subunit">
    <text evidence="5">Interacts with S.aureus chemotaxis inhibitory protein (CHIPS); the interaction blocks the receptor and may thus inhibit the immune response.</text>
</comment>
<comment type="interaction">
    <interactant intactId="EBI-2869495">
        <id>P21462</id>
    </interactant>
    <interactant intactId="EBI-3904795">
        <id>P25098</id>
        <label>GRK2</label>
    </interactant>
    <organismsDiffer>false</organismsDiffer>
    <experiments>3</experiments>
</comment>
<comment type="interaction">
    <interactant intactId="EBI-2869495">
        <id>P21462</id>
    </interactant>
    <interactant intactId="EBI-2116951">
        <id>O15264</id>
        <label>MAPK13</label>
    </interactant>
    <organismsDiffer>false</organismsDiffer>
    <experiments>3</experiments>
</comment>
<comment type="subcellular location">
    <subcellularLocation>
        <location evidence="5 9 10 18">Cell membrane</location>
        <topology evidence="1">Multi-pass membrane protein</topology>
    </subcellularLocation>
    <text evidence="6 10">Internalizes in presence of its ligands, fMLP, TAFA4 and CTSG.</text>
</comment>
<comment type="tissue specificity">
    <text>Neutrophils.</text>
</comment>
<comment type="PTM">
    <text evidence="4">Phosphorylated; which is necessary for desensitization.</text>
</comment>
<comment type="similarity">
    <text evidence="2">Belongs to the G-protein coupled receptor 1 family.</text>
</comment>
<comment type="online information" name="Atlas of Genetics and Cytogenetics in Oncology and Haematology">
    <link uri="https://atlasgeneticsoncology.org/gene/44328/FPR1"/>
</comment>
<proteinExistence type="evidence at protein level"/>
<evidence type="ECO:0000255" key="1"/>
<evidence type="ECO:0000255" key="2">
    <source>
        <dbReference type="PROSITE-ProRule" id="PRU00521"/>
    </source>
</evidence>
<evidence type="ECO:0000256" key="3">
    <source>
        <dbReference type="SAM" id="MobiDB-lite"/>
    </source>
</evidence>
<evidence type="ECO:0000269" key="4">
    <source>
    </source>
</evidence>
<evidence type="ECO:0000269" key="5">
    <source>
    </source>
</evidence>
<evidence type="ECO:0000269" key="6">
    <source>
    </source>
</evidence>
<evidence type="ECO:0000269" key="7">
    <source>
    </source>
</evidence>
<evidence type="ECO:0000269" key="8">
    <source>
    </source>
</evidence>
<evidence type="ECO:0000269" key="9">
    <source>
    </source>
</evidence>
<evidence type="ECO:0000269" key="10">
    <source>
    </source>
</evidence>
<evidence type="ECO:0000269" key="11">
    <source ref="5"/>
</evidence>
<evidence type="ECO:0000269" key="12">
    <source ref="7"/>
</evidence>
<evidence type="ECO:0000303" key="13">
    <source>
    </source>
</evidence>
<evidence type="ECO:0000303" key="14">
    <source>
    </source>
</evidence>
<evidence type="ECO:0000303" key="15">
    <source>
    </source>
</evidence>
<evidence type="ECO:0000303" key="16">
    <source>
    </source>
</evidence>
<evidence type="ECO:0000305" key="17"/>
<evidence type="ECO:0000305" key="18">
    <source>
    </source>
</evidence>
<evidence type="ECO:0007829" key="19">
    <source>
        <dbReference type="PDB" id="7VFX"/>
    </source>
</evidence>
<gene>
    <name type="primary">FPR1</name>
</gene>
<organism>
    <name type="scientific">Homo sapiens</name>
    <name type="common">Human</name>
    <dbReference type="NCBI Taxonomy" id="9606"/>
    <lineage>
        <taxon>Eukaryota</taxon>
        <taxon>Metazoa</taxon>
        <taxon>Chordata</taxon>
        <taxon>Craniata</taxon>
        <taxon>Vertebrata</taxon>
        <taxon>Euteleostomi</taxon>
        <taxon>Mammalia</taxon>
        <taxon>Eutheria</taxon>
        <taxon>Euarchontoglires</taxon>
        <taxon>Primates</taxon>
        <taxon>Haplorrhini</taxon>
        <taxon>Catarrhini</taxon>
        <taxon>Hominidae</taxon>
        <taxon>Homo</taxon>
    </lineage>
</organism>